<proteinExistence type="inferred from homology"/>
<accession>P16812</accession>
<accession>Q7M6P9</accession>
<organism>
    <name type="scientific">Human cytomegalovirus (strain AD169)</name>
    <name type="common">HHV-5</name>
    <name type="synonym">Human herpesvirus 5</name>
    <dbReference type="NCBI Taxonomy" id="10360"/>
    <lineage>
        <taxon>Viruses</taxon>
        <taxon>Duplodnaviria</taxon>
        <taxon>Heunggongvirae</taxon>
        <taxon>Peploviricota</taxon>
        <taxon>Herviviricetes</taxon>
        <taxon>Herpesvirales</taxon>
        <taxon>Orthoherpesviridae</taxon>
        <taxon>Betaherpesvirinae</taxon>
        <taxon>Cytomegalovirus</taxon>
        <taxon>Cytomegalovirus humanbeta5</taxon>
        <taxon>Human cytomegalovirus</taxon>
    </lineage>
</organism>
<comment type="function">
    <text evidence="1">Acts as a transcriptional repressor of the US3 gene expression through a specific DNA sequence named the transcriptional repressive element (tre).</text>
</comment>
<comment type="subcellular location">
    <subcellularLocation>
        <location evidence="1">Host nucleus</location>
    </subcellularLocation>
</comment>
<comment type="similarity">
    <text evidence="3">Belongs to the HHV-5 UL34 protein family.</text>
</comment>
<comment type="sequence caution" evidence="3">
    <conflict type="erroneous initiation">
        <sequence resource="EMBL-CDS" id="CAA35393"/>
    </conflict>
</comment>
<dbReference type="EMBL" id="X17403">
    <property type="protein sequence ID" value="CAA35393.1"/>
    <property type="status" value="ALT_INIT"/>
    <property type="molecule type" value="Genomic_DNA"/>
</dbReference>
<dbReference type="EMBL" id="BK000394">
    <property type="protein sequence ID" value="DAA00139.1"/>
    <property type="molecule type" value="Genomic_DNA"/>
</dbReference>
<dbReference type="PIR" id="S09797">
    <property type="entry name" value="S09797"/>
</dbReference>
<dbReference type="Proteomes" id="UP000008991">
    <property type="component" value="Segment"/>
</dbReference>
<dbReference type="Proteomes" id="UP000008992">
    <property type="component" value="Segment"/>
</dbReference>
<dbReference type="GO" id="GO:0042025">
    <property type="term" value="C:host cell nucleus"/>
    <property type="evidence" value="ECO:0007669"/>
    <property type="project" value="UniProtKB-SubCell"/>
</dbReference>
<organismHost>
    <name type="scientific">Homo sapiens</name>
    <name type="common">Human</name>
    <dbReference type="NCBI Taxonomy" id="9606"/>
</organismHost>
<keyword id="KW-1048">Host nucleus</keyword>
<keyword id="KW-1185">Reference proteome</keyword>
<reference key="1">
    <citation type="journal article" date="1990" name="Curr. Top. Microbiol. Immunol.">
        <title>Analysis of the protein-coding content of the sequence of human cytomegalovirus strain AD169.</title>
        <authorList>
            <person name="Chee M.S."/>
            <person name="Bankier A.T."/>
            <person name="Beck S."/>
            <person name="Bohni R."/>
            <person name="Brown C.M."/>
            <person name="Cerny R."/>
            <person name="Horsnell T."/>
            <person name="Hutchison C.A. III"/>
            <person name="Kouzarides T."/>
            <person name="Martignetti J.A."/>
            <person name="Preddie E."/>
            <person name="Satchwell S.C."/>
            <person name="Tomlinson P."/>
            <person name="Weston K.M."/>
            <person name="Barrell B.G."/>
        </authorList>
    </citation>
    <scope>NUCLEOTIDE SEQUENCE [LARGE SCALE GENOMIC DNA]</scope>
</reference>
<reference key="2">
    <citation type="journal article" date="2003" name="J. Gen. Virol.">
        <title>The human cytomegalovirus genome revisited: comparison with the chimpanzee cytomegalovirus genome.</title>
        <authorList>
            <person name="Davison A.J."/>
            <person name="Dolan A."/>
            <person name="Akter P."/>
            <person name="Addison C."/>
            <person name="Dargan D.J."/>
            <person name="Alcendor D.J."/>
            <person name="McGeoch D.J."/>
            <person name="Hayward G.S."/>
        </authorList>
    </citation>
    <scope>GENOME REANNOTATION</scope>
</reference>
<reference key="3">
    <citation type="journal article" date="2003" name="J. Gen. Virol.">
        <authorList>
            <person name="Davison A.J."/>
            <person name="Dolan A."/>
            <person name="Akter P."/>
            <person name="Addison C."/>
            <person name="Dargan D.J."/>
            <person name="Alcendor D.J."/>
            <person name="McGeoch D.J."/>
            <person name="Hayward G.S."/>
        </authorList>
    </citation>
    <scope>ERRATUM OF PUBMED:12533697</scope>
</reference>
<feature type="chain" id="PRO_0000115317" description="Transcriptional regulator UL34">
    <location>
        <begin position="1"/>
        <end position="407"/>
    </location>
</feature>
<feature type="region of interest" description="Disordered" evidence="2">
    <location>
        <begin position="267"/>
        <end position="330"/>
    </location>
</feature>
<feature type="region of interest" description="Disordered" evidence="2">
    <location>
        <begin position="388"/>
        <end position="407"/>
    </location>
</feature>
<feature type="compositionally biased region" description="Acidic residues" evidence="2">
    <location>
        <begin position="273"/>
        <end position="286"/>
    </location>
</feature>
<feature type="compositionally biased region" description="Basic and acidic residues" evidence="2">
    <location>
        <begin position="287"/>
        <end position="301"/>
    </location>
</feature>
<feature type="compositionally biased region" description="Basic residues" evidence="2">
    <location>
        <begin position="302"/>
        <end position="312"/>
    </location>
</feature>
<sequence length="407" mass="45381">MNFIITTRDFSNDDSVLRAAEMRDNVAGSISKAYKGTVRAEGKKKLLLKHLPVPPGGCSRRNSNLFVFCTERDYRKFHQGIAQLKRAPAELDPHEIQQVTASIRCRLQPSLREPPTPADELQTAVSRVCALFNQLVFTAQLRHYCEHQDKVVSYARDELTKRCGEKSALGVEVHQLVALLPHERHRELCHVLIGLLHQTPHMWARSIRLIGHLRHYLQNSFLHLLMNSGLDIAQVFDGCYHSEAYRMLFQIGHTDSVSAALELSHGAAAGPPEADENNDEGEEDDDELRHSDPAPLHESKKPRNARRPRTRVPPHEQKPEENEEEEEELFPSCKATAAFLRAEPSVSNDDGNGGERCDTLATALRHRADEEDGPLASQTAVRVAATPSPSVTPALTPVTSPITPLCI</sequence>
<name>UL34_HCMVA</name>
<protein>
    <recommendedName>
        <fullName>Transcriptional regulator UL34</fullName>
    </recommendedName>
</protein>
<gene>
    <name type="primary">UL34</name>
</gene>
<evidence type="ECO:0000250" key="1"/>
<evidence type="ECO:0000256" key="2">
    <source>
        <dbReference type="SAM" id="MobiDB-lite"/>
    </source>
</evidence>
<evidence type="ECO:0000305" key="3"/>